<organism>
    <name type="scientific">Synechococcus elongatus (strain ATCC 33912 / PCC 7942 / FACHB-805)</name>
    <name type="common">Anacystis nidulans R2</name>
    <dbReference type="NCBI Taxonomy" id="1140"/>
    <lineage>
        <taxon>Bacteria</taxon>
        <taxon>Bacillati</taxon>
        <taxon>Cyanobacteriota</taxon>
        <taxon>Cyanophyceae</taxon>
        <taxon>Synechococcales</taxon>
        <taxon>Synechococcaceae</taxon>
        <taxon>Synechococcus</taxon>
    </lineage>
</organism>
<name>RNH2_SYNE7</name>
<protein>
    <recommendedName>
        <fullName evidence="1">Ribonuclease HII</fullName>
        <shortName evidence="1">RNase HII</shortName>
        <ecNumber evidence="1">3.1.26.4</ecNumber>
    </recommendedName>
</protein>
<comment type="function">
    <text evidence="1">Endonuclease that specifically degrades the RNA of RNA-DNA hybrids.</text>
</comment>
<comment type="catalytic activity">
    <reaction evidence="1">
        <text>Endonucleolytic cleavage to 5'-phosphomonoester.</text>
        <dbReference type="EC" id="3.1.26.4"/>
    </reaction>
</comment>
<comment type="cofactor">
    <cofactor evidence="1">
        <name>Mn(2+)</name>
        <dbReference type="ChEBI" id="CHEBI:29035"/>
    </cofactor>
    <cofactor evidence="1">
        <name>Mg(2+)</name>
        <dbReference type="ChEBI" id="CHEBI:18420"/>
    </cofactor>
    <text evidence="1">Manganese or magnesium. Binds 1 divalent metal ion per monomer in the absence of substrate. May bind a second metal ion after substrate binding.</text>
</comment>
<comment type="subcellular location">
    <subcellularLocation>
        <location evidence="1">Cytoplasm</location>
    </subcellularLocation>
</comment>
<comment type="similarity">
    <text evidence="1">Belongs to the RNase HII family.</text>
</comment>
<evidence type="ECO:0000255" key="1">
    <source>
        <dbReference type="HAMAP-Rule" id="MF_00052"/>
    </source>
</evidence>
<evidence type="ECO:0000255" key="2">
    <source>
        <dbReference type="PROSITE-ProRule" id="PRU01319"/>
    </source>
</evidence>
<keyword id="KW-0963">Cytoplasm</keyword>
<keyword id="KW-0255">Endonuclease</keyword>
<keyword id="KW-0378">Hydrolase</keyword>
<keyword id="KW-0464">Manganese</keyword>
<keyword id="KW-0479">Metal-binding</keyword>
<keyword id="KW-0540">Nuclease</keyword>
<keyword id="KW-1185">Reference proteome</keyword>
<dbReference type="EC" id="3.1.26.4" evidence="1"/>
<dbReference type="EMBL" id="CP000100">
    <property type="protein sequence ID" value="ABB56909.1"/>
    <property type="molecule type" value="Genomic_DNA"/>
</dbReference>
<dbReference type="RefSeq" id="WP_011242973.1">
    <property type="nucleotide sequence ID" value="NZ_JACJTX010000005.1"/>
</dbReference>
<dbReference type="SMR" id="Q31PW0"/>
<dbReference type="STRING" id="1140.Synpcc7942_0879"/>
<dbReference type="PaxDb" id="1140-Synpcc7942_0879"/>
<dbReference type="KEGG" id="syf:Synpcc7942_0879"/>
<dbReference type="eggNOG" id="COG0164">
    <property type="taxonomic scope" value="Bacteria"/>
</dbReference>
<dbReference type="HOGENOM" id="CLU_036532_3_2_3"/>
<dbReference type="OrthoDB" id="9803420at2"/>
<dbReference type="BioCyc" id="SYNEL:SYNPCC7942_0879-MONOMER"/>
<dbReference type="Proteomes" id="UP000889800">
    <property type="component" value="Chromosome"/>
</dbReference>
<dbReference type="GO" id="GO:0005737">
    <property type="term" value="C:cytoplasm"/>
    <property type="evidence" value="ECO:0007669"/>
    <property type="project" value="UniProtKB-SubCell"/>
</dbReference>
<dbReference type="GO" id="GO:0032299">
    <property type="term" value="C:ribonuclease H2 complex"/>
    <property type="evidence" value="ECO:0007669"/>
    <property type="project" value="TreeGrafter"/>
</dbReference>
<dbReference type="GO" id="GO:0030145">
    <property type="term" value="F:manganese ion binding"/>
    <property type="evidence" value="ECO:0007669"/>
    <property type="project" value="UniProtKB-UniRule"/>
</dbReference>
<dbReference type="GO" id="GO:0003723">
    <property type="term" value="F:RNA binding"/>
    <property type="evidence" value="ECO:0007669"/>
    <property type="project" value="InterPro"/>
</dbReference>
<dbReference type="GO" id="GO:0004523">
    <property type="term" value="F:RNA-DNA hybrid ribonuclease activity"/>
    <property type="evidence" value="ECO:0007669"/>
    <property type="project" value="UniProtKB-UniRule"/>
</dbReference>
<dbReference type="GO" id="GO:0043137">
    <property type="term" value="P:DNA replication, removal of RNA primer"/>
    <property type="evidence" value="ECO:0007669"/>
    <property type="project" value="TreeGrafter"/>
</dbReference>
<dbReference type="GO" id="GO:0006298">
    <property type="term" value="P:mismatch repair"/>
    <property type="evidence" value="ECO:0007669"/>
    <property type="project" value="TreeGrafter"/>
</dbReference>
<dbReference type="CDD" id="cd07182">
    <property type="entry name" value="RNase_HII_bacteria_HII_like"/>
    <property type="match status" value="1"/>
</dbReference>
<dbReference type="Gene3D" id="3.30.420.10">
    <property type="entry name" value="Ribonuclease H-like superfamily/Ribonuclease H"/>
    <property type="match status" value="1"/>
</dbReference>
<dbReference type="HAMAP" id="MF_00052_B">
    <property type="entry name" value="RNase_HII_B"/>
    <property type="match status" value="1"/>
</dbReference>
<dbReference type="InterPro" id="IPR022898">
    <property type="entry name" value="RNase_HII"/>
</dbReference>
<dbReference type="InterPro" id="IPR001352">
    <property type="entry name" value="RNase_HII/HIII"/>
</dbReference>
<dbReference type="InterPro" id="IPR024567">
    <property type="entry name" value="RNase_HII/HIII_dom"/>
</dbReference>
<dbReference type="InterPro" id="IPR012337">
    <property type="entry name" value="RNaseH-like_sf"/>
</dbReference>
<dbReference type="InterPro" id="IPR036397">
    <property type="entry name" value="RNaseH_sf"/>
</dbReference>
<dbReference type="NCBIfam" id="NF000595">
    <property type="entry name" value="PRK00015.1-3"/>
    <property type="match status" value="1"/>
</dbReference>
<dbReference type="NCBIfam" id="NF010537">
    <property type="entry name" value="PRK13925.1"/>
    <property type="match status" value="1"/>
</dbReference>
<dbReference type="PANTHER" id="PTHR10954">
    <property type="entry name" value="RIBONUCLEASE H2 SUBUNIT A"/>
    <property type="match status" value="1"/>
</dbReference>
<dbReference type="PANTHER" id="PTHR10954:SF18">
    <property type="entry name" value="RIBONUCLEASE HII"/>
    <property type="match status" value="1"/>
</dbReference>
<dbReference type="Pfam" id="PF01351">
    <property type="entry name" value="RNase_HII"/>
    <property type="match status" value="1"/>
</dbReference>
<dbReference type="SUPFAM" id="SSF53098">
    <property type="entry name" value="Ribonuclease H-like"/>
    <property type="match status" value="1"/>
</dbReference>
<dbReference type="PROSITE" id="PS51975">
    <property type="entry name" value="RNASE_H_2"/>
    <property type="match status" value="1"/>
</dbReference>
<feature type="chain" id="PRO_0000235783" description="Ribonuclease HII">
    <location>
        <begin position="1"/>
        <end position="215"/>
    </location>
</feature>
<feature type="domain" description="RNase H type-2" evidence="2">
    <location>
        <begin position="19"/>
        <end position="213"/>
    </location>
</feature>
<feature type="binding site" evidence="1">
    <location>
        <position position="25"/>
    </location>
    <ligand>
        <name>a divalent metal cation</name>
        <dbReference type="ChEBI" id="CHEBI:60240"/>
    </ligand>
</feature>
<feature type="binding site" evidence="1">
    <location>
        <position position="26"/>
    </location>
    <ligand>
        <name>a divalent metal cation</name>
        <dbReference type="ChEBI" id="CHEBI:60240"/>
    </ligand>
</feature>
<feature type="binding site" evidence="1">
    <location>
        <position position="121"/>
    </location>
    <ligand>
        <name>a divalent metal cation</name>
        <dbReference type="ChEBI" id="CHEBI:60240"/>
    </ligand>
</feature>
<gene>
    <name evidence="1" type="primary">rnhB</name>
    <name type="ordered locus">Synpcc7942_0879</name>
</gene>
<sequence>MSPKTRLDSDFFGPGDRWQTVAGVDEVGRGCLFGPVVTAAVILPETAIAPLQQAGVTDSKRLSQRQRQQLYPLICEVALATGWGLASVAEIERWNILQATFLAMRRAIAKLDRPISRCLIDGNQQVPQLTYPQTTVIQGDRHCITIAAASILAKVWRDRLIERLDERYPGYALGRHKGYGTAQHRQAILQLGPTPLHRIRFLRSLRQPSQQIDLF</sequence>
<proteinExistence type="inferred from homology"/>
<reference key="1">
    <citation type="submission" date="2005-08" db="EMBL/GenBank/DDBJ databases">
        <title>Complete sequence of chromosome 1 of Synechococcus elongatus PCC 7942.</title>
        <authorList>
            <consortium name="US DOE Joint Genome Institute"/>
            <person name="Copeland A."/>
            <person name="Lucas S."/>
            <person name="Lapidus A."/>
            <person name="Barry K."/>
            <person name="Detter J.C."/>
            <person name="Glavina T."/>
            <person name="Hammon N."/>
            <person name="Israni S."/>
            <person name="Pitluck S."/>
            <person name="Schmutz J."/>
            <person name="Larimer F."/>
            <person name="Land M."/>
            <person name="Kyrpides N."/>
            <person name="Lykidis A."/>
            <person name="Golden S."/>
            <person name="Richardson P."/>
        </authorList>
    </citation>
    <scope>NUCLEOTIDE SEQUENCE [LARGE SCALE GENOMIC DNA]</scope>
    <source>
        <strain>ATCC 33912 / PCC 7942 / FACHB-805</strain>
    </source>
</reference>
<accession>Q31PW0</accession>